<proteinExistence type="inferred from homology"/>
<protein>
    <recommendedName>
        <fullName evidence="1">Small ribosomal subunit protein bS16</fullName>
    </recommendedName>
    <alternativeName>
        <fullName evidence="2">30S ribosomal protein S16</fullName>
    </alternativeName>
</protein>
<accession>Q92FW8</accession>
<organism>
    <name type="scientific">Rickettsia conorii (strain ATCC VR-613 / Malish 7)</name>
    <dbReference type="NCBI Taxonomy" id="272944"/>
    <lineage>
        <taxon>Bacteria</taxon>
        <taxon>Pseudomonadati</taxon>
        <taxon>Pseudomonadota</taxon>
        <taxon>Alphaproteobacteria</taxon>
        <taxon>Rickettsiales</taxon>
        <taxon>Rickettsiaceae</taxon>
        <taxon>Rickettsieae</taxon>
        <taxon>Rickettsia</taxon>
        <taxon>spotted fever group</taxon>
    </lineage>
</organism>
<name>RS16_RICCN</name>
<reference key="1">
    <citation type="journal article" date="2001" name="Science">
        <title>Mechanisms of evolution in Rickettsia conorii and R. prowazekii.</title>
        <authorList>
            <person name="Ogata H."/>
            <person name="Audic S."/>
            <person name="Renesto-Audiffren P."/>
            <person name="Fournier P.-E."/>
            <person name="Barbe V."/>
            <person name="Samson D."/>
            <person name="Roux V."/>
            <person name="Cossart P."/>
            <person name="Weissenbach J."/>
            <person name="Claverie J.-M."/>
            <person name="Raoult D."/>
        </authorList>
    </citation>
    <scope>NUCLEOTIDE SEQUENCE [LARGE SCALE GENOMIC DNA]</scope>
    <source>
        <strain>ATCC VR-613 / Malish 7</strain>
    </source>
</reference>
<comment type="similarity">
    <text evidence="1">Belongs to the bacterial ribosomal protein bS16 family.</text>
</comment>
<gene>
    <name evidence="1" type="primary">rpsP</name>
    <name type="ordered locus">RC1359</name>
</gene>
<evidence type="ECO:0000255" key="1">
    <source>
        <dbReference type="HAMAP-Rule" id="MF_00385"/>
    </source>
</evidence>
<evidence type="ECO:0000305" key="2"/>
<dbReference type="EMBL" id="AE006914">
    <property type="protein sequence ID" value="AAL03897.1"/>
    <property type="molecule type" value="Genomic_DNA"/>
</dbReference>
<dbReference type="PIR" id="G97869">
    <property type="entry name" value="G97869"/>
</dbReference>
<dbReference type="RefSeq" id="WP_004997078.1">
    <property type="nucleotide sequence ID" value="NC_003103.1"/>
</dbReference>
<dbReference type="SMR" id="Q92FW8"/>
<dbReference type="GeneID" id="95361740"/>
<dbReference type="KEGG" id="rco:RC1359"/>
<dbReference type="HOGENOM" id="CLU_100590_3_1_5"/>
<dbReference type="Proteomes" id="UP000000816">
    <property type="component" value="Chromosome"/>
</dbReference>
<dbReference type="GO" id="GO:0005737">
    <property type="term" value="C:cytoplasm"/>
    <property type="evidence" value="ECO:0007669"/>
    <property type="project" value="UniProtKB-ARBA"/>
</dbReference>
<dbReference type="GO" id="GO:0015935">
    <property type="term" value="C:small ribosomal subunit"/>
    <property type="evidence" value="ECO:0007669"/>
    <property type="project" value="TreeGrafter"/>
</dbReference>
<dbReference type="GO" id="GO:0003735">
    <property type="term" value="F:structural constituent of ribosome"/>
    <property type="evidence" value="ECO:0007669"/>
    <property type="project" value="InterPro"/>
</dbReference>
<dbReference type="GO" id="GO:0006412">
    <property type="term" value="P:translation"/>
    <property type="evidence" value="ECO:0007669"/>
    <property type="project" value="UniProtKB-UniRule"/>
</dbReference>
<dbReference type="Gene3D" id="3.30.1320.10">
    <property type="match status" value="1"/>
</dbReference>
<dbReference type="HAMAP" id="MF_00385">
    <property type="entry name" value="Ribosomal_bS16"/>
    <property type="match status" value="1"/>
</dbReference>
<dbReference type="InterPro" id="IPR000307">
    <property type="entry name" value="Ribosomal_bS16"/>
</dbReference>
<dbReference type="InterPro" id="IPR020592">
    <property type="entry name" value="Ribosomal_bS16_CS"/>
</dbReference>
<dbReference type="InterPro" id="IPR023803">
    <property type="entry name" value="Ribosomal_bS16_dom_sf"/>
</dbReference>
<dbReference type="NCBIfam" id="TIGR00002">
    <property type="entry name" value="S16"/>
    <property type="match status" value="1"/>
</dbReference>
<dbReference type="PANTHER" id="PTHR12919">
    <property type="entry name" value="30S RIBOSOMAL PROTEIN S16"/>
    <property type="match status" value="1"/>
</dbReference>
<dbReference type="PANTHER" id="PTHR12919:SF20">
    <property type="entry name" value="SMALL RIBOSOMAL SUBUNIT PROTEIN BS16M"/>
    <property type="match status" value="1"/>
</dbReference>
<dbReference type="Pfam" id="PF00886">
    <property type="entry name" value="Ribosomal_S16"/>
    <property type="match status" value="1"/>
</dbReference>
<dbReference type="SUPFAM" id="SSF54565">
    <property type="entry name" value="Ribosomal protein S16"/>
    <property type="match status" value="1"/>
</dbReference>
<dbReference type="PROSITE" id="PS00732">
    <property type="entry name" value="RIBOSOMAL_S16"/>
    <property type="match status" value="1"/>
</dbReference>
<feature type="chain" id="PRO_0000167234" description="Small ribosomal subunit protein bS16">
    <location>
        <begin position="1"/>
        <end position="111"/>
    </location>
</feature>
<sequence>MAVKIRLARGGAKKRPFYRVVVANATAPRDGDFLEKVGTYDPMLASDNSERVVLKKDRIEYWLGTGAKPTERVAKFIEQAGVTLPEKVKKEMEVKAKNRKARLSKKEAKEA</sequence>
<keyword id="KW-0687">Ribonucleoprotein</keyword>
<keyword id="KW-0689">Ribosomal protein</keyword>